<feature type="chain" id="PRO_0000305244" description="HTH-type transcriptional regulatory protein GabR">
    <location>
        <begin position="1"/>
        <end position="479"/>
    </location>
</feature>
<feature type="domain" description="HTH gntR-type" evidence="2">
    <location>
        <begin position="14"/>
        <end position="82"/>
    </location>
</feature>
<feature type="DNA-binding region" description="H-T-H motif" evidence="2">
    <location>
        <begin position="42"/>
        <end position="61"/>
    </location>
</feature>
<feature type="modified residue" description="N6-(pyridoxal phosphate)lysine" evidence="1">
    <location>
        <position position="312"/>
    </location>
</feature>
<feature type="helix" evidence="7">
    <location>
        <begin position="16"/>
        <end position="29"/>
    </location>
</feature>
<feature type="strand" evidence="6">
    <location>
        <begin position="31"/>
        <end position="33"/>
    </location>
</feature>
<feature type="helix" evidence="7">
    <location>
        <begin position="42"/>
        <end position="48"/>
    </location>
</feature>
<feature type="helix" evidence="7">
    <location>
        <begin position="53"/>
        <end position="65"/>
    </location>
</feature>
<feature type="strand" evidence="7">
    <location>
        <begin position="68"/>
        <end position="72"/>
    </location>
</feature>
<feature type="turn" evidence="7">
    <location>
        <begin position="73"/>
        <end position="75"/>
    </location>
</feature>
<feature type="strand" evidence="7">
    <location>
        <begin position="76"/>
        <end position="79"/>
    </location>
</feature>
<feature type="helix" evidence="7">
    <location>
        <begin position="97"/>
        <end position="99"/>
    </location>
</feature>
<feature type="strand" evidence="9">
    <location>
        <begin position="110"/>
        <end position="114"/>
    </location>
</feature>
<feature type="helix" evidence="9">
    <location>
        <begin position="119"/>
        <end position="121"/>
    </location>
</feature>
<feature type="helix" evidence="9">
    <location>
        <begin position="124"/>
        <end position="137"/>
    </location>
</feature>
<feature type="turn" evidence="9">
    <location>
        <begin position="139"/>
        <end position="143"/>
    </location>
</feature>
<feature type="helix" evidence="9">
    <location>
        <begin position="152"/>
        <end position="166"/>
    </location>
</feature>
<feature type="helix" evidence="9">
    <location>
        <begin position="172"/>
        <end position="174"/>
    </location>
</feature>
<feature type="strand" evidence="9">
    <location>
        <begin position="175"/>
        <end position="180"/>
    </location>
</feature>
<feature type="helix" evidence="9">
    <location>
        <begin position="181"/>
        <end position="191"/>
    </location>
</feature>
<feature type="strand" evidence="9">
    <location>
        <begin position="198"/>
        <end position="203"/>
    </location>
</feature>
<feature type="helix" evidence="9">
    <location>
        <begin position="206"/>
        <end position="214"/>
    </location>
</feature>
<feature type="strand" evidence="9">
    <location>
        <begin position="219"/>
        <end position="225"/>
    </location>
</feature>
<feature type="helix" evidence="9">
    <location>
        <begin position="231"/>
        <end position="237"/>
    </location>
</feature>
<feature type="strand" evidence="9">
    <location>
        <begin position="240"/>
        <end position="244"/>
    </location>
</feature>
<feature type="turn" evidence="9">
    <location>
        <begin position="250"/>
        <end position="252"/>
    </location>
</feature>
<feature type="helix" evidence="9">
    <location>
        <begin position="258"/>
        <end position="270"/>
    </location>
</feature>
<feature type="strand" evidence="8">
    <location>
        <begin position="271"/>
        <end position="273"/>
    </location>
</feature>
<feature type="strand" evidence="9">
    <location>
        <begin position="275"/>
        <end position="279"/>
    </location>
</feature>
<feature type="strand" evidence="9">
    <location>
        <begin position="286"/>
        <end position="289"/>
    </location>
</feature>
<feature type="helix" evidence="9">
    <location>
        <begin position="295"/>
        <end position="298"/>
    </location>
</feature>
<feature type="strand" evidence="7">
    <location>
        <begin position="300"/>
        <end position="302"/>
    </location>
</feature>
<feature type="strand" evidence="9">
    <location>
        <begin position="304"/>
        <end position="310"/>
    </location>
</feature>
<feature type="turn" evidence="9">
    <location>
        <begin position="311"/>
        <end position="313"/>
    </location>
</feature>
<feature type="helix" evidence="8">
    <location>
        <begin position="316"/>
        <end position="318"/>
    </location>
</feature>
<feature type="strand" evidence="9">
    <location>
        <begin position="321"/>
        <end position="324"/>
    </location>
</feature>
<feature type="helix" evidence="9">
    <location>
        <begin position="327"/>
        <end position="334"/>
    </location>
</feature>
<feature type="helix" evidence="9">
    <location>
        <begin position="345"/>
        <end position="356"/>
    </location>
</feature>
<feature type="helix" evidence="9">
    <location>
        <begin position="359"/>
        <end position="385"/>
    </location>
</feature>
<feature type="turn" evidence="9">
    <location>
        <begin position="386"/>
        <end position="388"/>
    </location>
</feature>
<feature type="strand" evidence="9">
    <location>
        <begin position="390"/>
        <end position="394"/>
    </location>
</feature>
<feature type="strand" evidence="9">
    <location>
        <begin position="396"/>
        <end position="405"/>
    </location>
</feature>
<feature type="strand" evidence="9">
    <location>
        <begin position="407"/>
        <end position="409"/>
    </location>
</feature>
<feature type="helix" evidence="9">
    <location>
        <begin position="411"/>
        <end position="420"/>
    </location>
</feature>
<feature type="helix" evidence="9">
    <location>
        <begin position="428"/>
        <end position="431"/>
    </location>
</feature>
<feature type="strand" evidence="9">
    <location>
        <begin position="444"/>
        <end position="448"/>
    </location>
</feature>
<feature type="helix" evidence="9">
    <location>
        <begin position="454"/>
        <end position="456"/>
    </location>
</feature>
<feature type="helix" evidence="9">
    <location>
        <begin position="457"/>
        <end position="469"/>
    </location>
</feature>
<dbReference type="EMBL" id="D50453">
    <property type="protein sequence ID" value="BAA09020.1"/>
    <property type="molecule type" value="Genomic_DNA"/>
</dbReference>
<dbReference type="EMBL" id="AL009126">
    <property type="protein sequence ID" value="CAB12197.1"/>
    <property type="molecule type" value="Genomic_DNA"/>
</dbReference>
<dbReference type="PIR" id="B69764">
    <property type="entry name" value="B69764"/>
</dbReference>
<dbReference type="RefSeq" id="NP_388271.1">
    <property type="nucleotide sequence ID" value="NC_000964.3"/>
</dbReference>
<dbReference type="RefSeq" id="WP_003246571.1">
    <property type="nucleotide sequence ID" value="NZ_OZ025638.1"/>
</dbReference>
<dbReference type="PDB" id="4MGR">
    <property type="method" value="X-ray"/>
    <property type="resolution" value="2.55 A"/>
    <property type="chains" value="A/B/C/D=1-479"/>
</dbReference>
<dbReference type="PDB" id="4N0B">
    <property type="method" value="X-ray"/>
    <property type="resolution" value="2.70 A"/>
    <property type="chains" value="A/B/C/D=1-479"/>
</dbReference>
<dbReference type="PDB" id="4TV7">
    <property type="method" value="X-ray"/>
    <property type="resolution" value="2.05 A"/>
    <property type="chains" value="A/B/C/D=1-479"/>
</dbReference>
<dbReference type="PDB" id="5T4J">
    <property type="method" value="X-ray"/>
    <property type="resolution" value="2.23 A"/>
    <property type="chains" value="B=107-471"/>
</dbReference>
<dbReference type="PDB" id="5T4K">
    <property type="method" value="X-ray"/>
    <property type="resolution" value="2.25 A"/>
    <property type="chains" value="A=107-471"/>
</dbReference>
<dbReference type="PDB" id="5X03">
    <property type="method" value="X-ray"/>
    <property type="resolution" value="2.00 A"/>
    <property type="chains" value="A=108-470, B=108-471"/>
</dbReference>
<dbReference type="PDB" id="6UXZ">
    <property type="method" value="X-ray"/>
    <property type="resolution" value="2.80 A"/>
    <property type="chains" value="B/C=107-470"/>
</dbReference>
<dbReference type="PDB" id="8VXK">
    <property type="method" value="X-ray"/>
    <property type="resolution" value="1.85 A"/>
    <property type="chains" value="A/B=104-479"/>
</dbReference>
<dbReference type="PDB" id="8VXL">
    <property type="method" value="X-ray"/>
    <property type="resolution" value="2.24 A"/>
    <property type="chains" value="A/B=104-479"/>
</dbReference>
<dbReference type="PDBsum" id="4MGR"/>
<dbReference type="PDBsum" id="4N0B"/>
<dbReference type="PDBsum" id="4TV7"/>
<dbReference type="PDBsum" id="5T4J"/>
<dbReference type="PDBsum" id="5T4K"/>
<dbReference type="PDBsum" id="5X03"/>
<dbReference type="PDBsum" id="6UXZ"/>
<dbReference type="PDBsum" id="8VXK"/>
<dbReference type="PDBsum" id="8VXL"/>
<dbReference type="SMR" id="P94426"/>
<dbReference type="FunCoup" id="P94426">
    <property type="interactions" value="153"/>
</dbReference>
<dbReference type="IntAct" id="P94426">
    <property type="interactions" value="1"/>
</dbReference>
<dbReference type="STRING" id="224308.BSU03890"/>
<dbReference type="PaxDb" id="224308-BSU03890"/>
<dbReference type="EnsemblBacteria" id="CAB12197">
    <property type="protein sequence ID" value="CAB12197"/>
    <property type="gene ID" value="BSU_03890"/>
</dbReference>
<dbReference type="GeneID" id="938271"/>
<dbReference type="KEGG" id="bsu:BSU03890"/>
<dbReference type="PATRIC" id="fig|224308.179.peg.412"/>
<dbReference type="eggNOG" id="COG1167">
    <property type="taxonomic scope" value="Bacteria"/>
</dbReference>
<dbReference type="InParanoid" id="P94426"/>
<dbReference type="OrthoDB" id="9808770at2"/>
<dbReference type="PhylomeDB" id="P94426"/>
<dbReference type="BioCyc" id="BSUB:BSU03890-MONOMER"/>
<dbReference type="EvolutionaryTrace" id="P94426"/>
<dbReference type="Proteomes" id="UP000001570">
    <property type="component" value="Chromosome"/>
</dbReference>
<dbReference type="GO" id="GO:0003677">
    <property type="term" value="F:DNA binding"/>
    <property type="evidence" value="ECO:0007669"/>
    <property type="project" value="UniProtKB-KW"/>
</dbReference>
<dbReference type="GO" id="GO:0003700">
    <property type="term" value="F:DNA-binding transcription factor activity"/>
    <property type="evidence" value="ECO:0007669"/>
    <property type="project" value="InterPro"/>
</dbReference>
<dbReference type="GO" id="GO:0030170">
    <property type="term" value="F:pyridoxal phosphate binding"/>
    <property type="evidence" value="ECO:0007669"/>
    <property type="project" value="InterPro"/>
</dbReference>
<dbReference type="GO" id="GO:0008483">
    <property type="term" value="F:transaminase activity"/>
    <property type="evidence" value="ECO:0007669"/>
    <property type="project" value="UniProtKB-KW"/>
</dbReference>
<dbReference type="GO" id="GO:0009058">
    <property type="term" value="P:biosynthetic process"/>
    <property type="evidence" value="ECO:0007669"/>
    <property type="project" value="InterPro"/>
</dbReference>
<dbReference type="CDD" id="cd00609">
    <property type="entry name" value="AAT_like"/>
    <property type="match status" value="1"/>
</dbReference>
<dbReference type="CDD" id="cd07377">
    <property type="entry name" value="WHTH_GntR"/>
    <property type="match status" value="1"/>
</dbReference>
<dbReference type="Gene3D" id="3.40.640.10">
    <property type="entry name" value="Type I PLP-dependent aspartate aminotransferase-like (Major domain)"/>
    <property type="match status" value="1"/>
</dbReference>
<dbReference type="Gene3D" id="1.10.10.10">
    <property type="entry name" value="Winged helix-like DNA-binding domain superfamily/Winged helix DNA-binding domain"/>
    <property type="match status" value="1"/>
</dbReference>
<dbReference type="InterPro" id="IPR004839">
    <property type="entry name" value="Aminotransferase_I/II_large"/>
</dbReference>
<dbReference type="InterPro" id="IPR051446">
    <property type="entry name" value="HTH_trans_reg/aminotransferase"/>
</dbReference>
<dbReference type="InterPro" id="IPR015424">
    <property type="entry name" value="PyrdxlP-dep_Trfase"/>
</dbReference>
<dbReference type="InterPro" id="IPR015421">
    <property type="entry name" value="PyrdxlP-dep_Trfase_major"/>
</dbReference>
<dbReference type="InterPro" id="IPR000524">
    <property type="entry name" value="Tscrpt_reg_HTH_GntR"/>
</dbReference>
<dbReference type="InterPro" id="IPR036388">
    <property type="entry name" value="WH-like_DNA-bd_sf"/>
</dbReference>
<dbReference type="InterPro" id="IPR036390">
    <property type="entry name" value="WH_DNA-bd_sf"/>
</dbReference>
<dbReference type="PANTHER" id="PTHR46577">
    <property type="entry name" value="HTH-TYPE TRANSCRIPTIONAL REGULATORY PROTEIN GABR"/>
    <property type="match status" value="1"/>
</dbReference>
<dbReference type="PANTHER" id="PTHR46577:SF1">
    <property type="entry name" value="HTH-TYPE TRANSCRIPTIONAL REGULATORY PROTEIN GABR"/>
    <property type="match status" value="1"/>
</dbReference>
<dbReference type="Pfam" id="PF00155">
    <property type="entry name" value="Aminotran_1_2"/>
    <property type="match status" value="1"/>
</dbReference>
<dbReference type="Pfam" id="PF00392">
    <property type="entry name" value="GntR"/>
    <property type="match status" value="1"/>
</dbReference>
<dbReference type="SMART" id="SM00345">
    <property type="entry name" value="HTH_GNTR"/>
    <property type="match status" value="1"/>
</dbReference>
<dbReference type="SUPFAM" id="SSF53383">
    <property type="entry name" value="PLP-dependent transferases"/>
    <property type="match status" value="1"/>
</dbReference>
<dbReference type="SUPFAM" id="SSF46785">
    <property type="entry name" value="Winged helix' DNA-binding domain"/>
    <property type="match status" value="1"/>
</dbReference>
<dbReference type="PROSITE" id="PS50949">
    <property type="entry name" value="HTH_GNTR"/>
    <property type="match status" value="1"/>
</dbReference>
<comment type="function">
    <text evidence="3 4">Activates the transcription of the gabTD operon. Is also a repressor of its own expression, both in the presence and absence of GABA. Binds specifically to the DNA region overlapping the -35 region of the gabT promoter and the -10 and +1 regions of the gabR promoter. Principally regulates the utilization of gamma-aminobutyrate.</text>
</comment>
<comment type="cofactor">
    <cofactor evidence="4">
        <name>pyridoxal 5'-phosphate</name>
        <dbReference type="ChEBI" id="CHEBI:597326"/>
    </cofactor>
</comment>
<comment type="similarity">
    <text evidence="5">In the C-terminal section; belongs to the class-I pyridoxal-phosphate-dependent aminotransferase family.</text>
</comment>
<proteinExistence type="evidence at protein level"/>
<organism>
    <name type="scientific">Bacillus subtilis (strain 168)</name>
    <dbReference type="NCBI Taxonomy" id="224308"/>
    <lineage>
        <taxon>Bacteria</taxon>
        <taxon>Bacillati</taxon>
        <taxon>Bacillota</taxon>
        <taxon>Bacilli</taxon>
        <taxon>Bacillales</taxon>
        <taxon>Bacillaceae</taxon>
        <taxon>Bacillus</taxon>
    </lineage>
</organism>
<protein>
    <recommendedName>
        <fullName>HTH-type transcriptional regulatory protein GabR</fullName>
    </recommendedName>
</protein>
<name>GABR_BACSU</name>
<gene>
    <name type="primary">gabR</name>
    <name type="synonym">ycnF</name>
    <name type="ordered locus">BSU03890</name>
</gene>
<reference key="1">
    <citation type="journal article" date="1996" name="Microbiology">
        <title>The 25 degrees-36 degrees region of the Bacillus subtilis chromosome: determination of the sequence of a 146 kb segment and identification of 113 genes.</title>
        <authorList>
            <person name="Yamane K."/>
            <person name="Kumano M."/>
            <person name="Kurita K."/>
        </authorList>
    </citation>
    <scope>NUCLEOTIDE SEQUENCE [GENOMIC DNA]</scope>
    <source>
        <strain>168</strain>
    </source>
</reference>
<reference key="2">
    <citation type="journal article" date="1997" name="Nature">
        <title>The complete genome sequence of the Gram-positive bacterium Bacillus subtilis.</title>
        <authorList>
            <person name="Kunst F."/>
            <person name="Ogasawara N."/>
            <person name="Moszer I."/>
            <person name="Albertini A.M."/>
            <person name="Alloni G."/>
            <person name="Azevedo V."/>
            <person name="Bertero M.G."/>
            <person name="Bessieres P."/>
            <person name="Bolotin A."/>
            <person name="Borchert S."/>
            <person name="Borriss R."/>
            <person name="Boursier L."/>
            <person name="Brans A."/>
            <person name="Braun M."/>
            <person name="Brignell S.C."/>
            <person name="Bron S."/>
            <person name="Brouillet S."/>
            <person name="Bruschi C.V."/>
            <person name="Caldwell B."/>
            <person name="Capuano V."/>
            <person name="Carter N.M."/>
            <person name="Choi S.-K."/>
            <person name="Codani J.-J."/>
            <person name="Connerton I.F."/>
            <person name="Cummings N.J."/>
            <person name="Daniel R.A."/>
            <person name="Denizot F."/>
            <person name="Devine K.M."/>
            <person name="Duesterhoeft A."/>
            <person name="Ehrlich S.D."/>
            <person name="Emmerson P.T."/>
            <person name="Entian K.-D."/>
            <person name="Errington J."/>
            <person name="Fabret C."/>
            <person name="Ferrari E."/>
            <person name="Foulger D."/>
            <person name="Fritz C."/>
            <person name="Fujita M."/>
            <person name="Fujita Y."/>
            <person name="Fuma S."/>
            <person name="Galizzi A."/>
            <person name="Galleron N."/>
            <person name="Ghim S.-Y."/>
            <person name="Glaser P."/>
            <person name="Goffeau A."/>
            <person name="Golightly E.J."/>
            <person name="Grandi G."/>
            <person name="Guiseppi G."/>
            <person name="Guy B.J."/>
            <person name="Haga K."/>
            <person name="Haiech J."/>
            <person name="Harwood C.R."/>
            <person name="Henaut A."/>
            <person name="Hilbert H."/>
            <person name="Holsappel S."/>
            <person name="Hosono S."/>
            <person name="Hullo M.-F."/>
            <person name="Itaya M."/>
            <person name="Jones L.-M."/>
            <person name="Joris B."/>
            <person name="Karamata D."/>
            <person name="Kasahara Y."/>
            <person name="Klaerr-Blanchard M."/>
            <person name="Klein C."/>
            <person name="Kobayashi Y."/>
            <person name="Koetter P."/>
            <person name="Koningstein G."/>
            <person name="Krogh S."/>
            <person name="Kumano M."/>
            <person name="Kurita K."/>
            <person name="Lapidus A."/>
            <person name="Lardinois S."/>
            <person name="Lauber J."/>
            <person name="Lazarevic V."/>
            <person name="Lee S.-M."/>
            <person name="Levine A."/>
            <person name="Liu H."/>
            <person name="Masuda S."/>
            <person name="Mauel C."/>
            <person name="Medigue C."/>
            <person name="Medina N."/>
            <person name="Mellado R.P."/>
            <person name="Mizuno M."/>
            <person name="Moestl D."/>
            <person name="Nakai S."/>
            <person name="Noback M."/>
            <person name="Noone D."/>
            <person name="O'Reilly M."/>
            <person name="Ogawa K."/>
            <person name="Ogiwara A."/>
            <person name="Oudega B."/>
            <person name="Park S.-H."/>
            <person name="Parro V."/>
            <person name="Pohl T.M."/>
            <person name="Portetelle D."/>
            <person name="Porwollik S."/>
            <person name="Prescott A.M."/>
            <person name="Presecan E."/>
            <person name="Pujic P."/>
            <person name="Purnelle B."/>
            <person name="Rapoport G."/>
            <person name="Rey M."/>
            <person name="Reynolds S."/>
            <person name="Rieger M."/>
            <person name="Rivolta C."/>
            <person name="Rocha E."/>
            <person name="Roche B."/>
            <person name="Rose M."/>
            <person name="Sadaie Y."/>
            <person name="Sato T."/>
            <person name="Scanlan E."/>
            <person name="Schleich S."/>
            <person name="Schroeter R."/>
            <person name="Scoffone F."/>
            <person name="Sekiguchi J."/>
            <person name="Sekowska A."/>
            <person name="Seror S.J."/>
            <person name="Serror P."/>
            <person name="Shin B.-S."/>
            <person name="Soldo B."/>
            <person name="Sorokin A."/>
            <person name="Tacconi E."/>
            <person name="Takagi T."/>
            <person name="Takahashi H."/>
            <person name="Takemaru K."/>
            <person name="Takeuchi M."/>
            <person name="Tamakoshi A."/>
            <person name="Tanaka T."/>
            <person name="Terpstra P."/>
            <person name="Tognoni A."/>
            <person name="Tosato V."/>
            <person name="Uchiyama S."/>
            <person name="Vandenbol M."/>
            <person name="Vannier F."/>
            <person name="Vassarotti A."/>
            <person name="Viari A."/>
            <person name="Wambutt R."/>
            <person name="Wedler E."/>
            <person name="Wedler H."/>
            <person name="Weitzenegger T."/>
            <person name="Winters P."/>
            <person name="Wipat A."/>
            <person name="Yamamoto H."/>
            <person name="Yamane K."/>
            <person name="Yasumoto K."/>
            <person name="Yata K."/>
            <person name="Yoshida K."/>
            <person name="Yoshikawa H.-F."/>
            <person name="Zumstein E."/>
            <person name="Yoshikawa H."/>
            <person name="Danchin A."/>
        </authorList>
    </citation>
    <scope>NUCLEOTIDE SEQUENCE [LARGE SCALE GENOMIC DNA]</scope>
    <source>
        <strain>168</strain>
    </source>
</reference>
<reference key="3">
    <citation type="journal article" date="2002" name="Mol. Microbiol.">
        <title>GabR, a member of a novel protein family, regulates the utilization of gamma-aminobutyrate in Bacillus subtilis.</title>
        <authorList>
            <person name="Belitsky B.R."/>
            <person name="Sonenshein A.L."/>
        </authorList>
    </citation>
    <scope>FUNCTION</scope>
    <scope>GENE FAMILY</scope>
</reference>
<reference key="4">
    <citation type="journal article" date="2004" name="J. Mol. Biol.">
        <title>Bacillus subtilis GabR, a protein with DNA-binding and aminotransferase domains, is a PLP-dependent transcriptional regulator.</title>
        <authorList>
            <person name="Belitsky B.R."/>
        </authorList>
    </citation>
    <scope>FUNCTION IN TRANSCRIPTION REGULATION</scope>
    <scope>DNA-BINDING</scope>
    <scope>COFACTOR</scope>
</reference>
<accession>P94426</accession>
<accession>Q797N6</accession>
<evidence type="ECO:0000250" key="1"/>
<evidence type="ECO:0000255" key="2">
    <source>
        <dbReference type="PROSITE-ProRule" id="PRU00307"/>
    </source>
</evidence>
<evidence type="ECO:0000269" key="3">
    <source>
    </source>
</evidence>
<evidence type="ECO:0000269" key="4">
    <source>
    </source>
</evidence>
<evidence type="ECO:0000305" key="5"/>
<evidence type="ECO:0007829" key="6">
    <source>
        <dbReference type="PDB" id="4MGR"/>
    </source>
</evidence>
<evidence type="ECO:0007829" key="7">
    <source>
        <dbReference type="PDB" id="4TV7"/>
    </source>
</evidence>
<evidence type="ECO:0007829" key="8">
    <source>
        <dbReference type="PDB" id="5T4J"/>
    </source>
</evidence>
<evidence type="ECO:0007829" key="9">
    <source>
        <dbReference type="PDB" id="5X03"/>
    </source>
</evidence>
<keyword id="KW-0002">3D-structure</keyword>
<keyword id="KW-0010">Activator</keyword>
<keyword id="KW-0032">Aminotransferase</keyword>
<keyword id="KW-0238">DNA-binding</keyword>
<keyword id="KW-0663">Pyridoxal phosphate</keyword>
<keyword id="KW-1185">Reference proteome</keyword>
<keyword id="KW-0678">Repressor</keyword>
<keyword id="KW-0804">Transcription</keyword>
<keyword id="KW-0805">Transcription regulation</keyword>
<keyword id="KW-0808">Transferase</keyword>
<sequence length="479" mass="55166">MDITITLDRSEQADYIYQQIYQKLKKEILSRNLLPHSKVPSKRELAENLKVSVNSVNSAYQQLLAEGYLYAIERKGFFVEELDMFSAEEHPPFALPDDLKEIHIDQSDWISFSHMSSDTDHFPIKSWFRCEQKAASRSYRTLGDMSHPQGIYEVRAAITRLISLTRGVKCRPEQMIIGAGTQVLMQLLTELLPKEAVYAMEEPGYRRMYQLLKNAGKQVKTIMLDEKGMSIAEITRQQPDVLVTTPSHQFPSGTIMPVSRRIQLLNWAAEEPRRYIIEDDYDSEFTYDVDSIPALQSLDRFQNVIYMGTFSKSLLPGLRISYMVLPPELLRAYKQRGYDLQTCSSLTQLTLQEFIESGEYQKHIKKMKQHYKEKRERLITALEAEFSGEVTVKGANAGLHFVTEFDTRRTEQDILSHAAGLQLEIFGMSRFNLKENKRQTGRPALIIGFARLKEEDIQEGVQRLFKAVYGHKKIPVTGD</sequence>